<sequence length="902" mass="98876">MGRRNRRATRHGESSKSALIDCHIPEEHFLQSTDPKEKTKNAGGAVEHTPLMKQFFAAKSDYPDLLLFFRMGDFYELFYDDARKAARLLDITLTQRGSSGGAPIPMAGVPVHAYEGYLARLVALGESVAICEQIGDPALAKGLVERKVVRIVTPGTVTDEALLDERRDTLLMAISRSKQGYGLAWADLAGGRFLVNEVDSADALEAEIARLEPAELLVPDEDNWPEFLRGRIGVRRRPPWLFDADSGRRQLLAFFKLHDLSGFGIDDKPCATAAAGALLGYVEETQKQRLPHLTSIAMEVASEAISMNAATRRHLELDTRVDGDTRNTLLGVLDSTVTPMGGRLLRRWLHRPLRLRDVLVQRHHAVGTLIDAAADADLREAFRALGDLERILTRVALRSARPRDFSTLRDGLALLPKVRAILAPLDSPRLQALHAELGEHDATAHLLISAVAETPPLKLSDGGVIATGYDADLDELRRLSTNADQFLIDLEQRERASSGIATLKVGYNRVHGYYIEISKGQAEKAPLHYSRRQTLTNAERYITEELKSFEDKVLSARERSLSREKLLYEGLLDALGTELEGLKRCAGALSELDVLAGFAERAQALDWSQPELDSAPCLRIERGRHPVVEAVREQPFEPNDLDLHSDRRMLVITGPNMGGKSTYMRQNALIVLLAHIGSYVPASRAVIGPIDRILTRIGAGDDLARGQSTFMVEMAETSYILHHATPQSLVLMDEIGRGTSTYDGLALADAVARHLAQTNRCYTLFATHYFELTALADASHAGGASGIANVHLDAVEHGERLVFMHAVKDGPANRSFGLQVAALAGLPKAAVTQARRRLAELEQRGGESHSAQMAPTALDAPQQFGLFTAPSSAAQEALQALDPDELTPKQALEALYRLKALL</sequence>
<organism>
    <name type="scientific">Xanthomonas axonopodis pv. citri (strain 306)</name>
    <dbReference type="NCBI Taxonomy" id="190486"/>
    <lineage>
        <taxon>Bacteria</taxon>
        <taxon>Pseudomonadati</taxon>
        <taxon>Pseudomonadota</taxon>
        <taxon>Gammaproteobacteria</taxon>
        <taxon>Lysobacterales</taxon>
        <taxon>Lysobacteraceae</taxon>
        <taxon>Xanthomonas</taxon>
    </lineage>
</organism>
<name>MUTS_XANAC</name>
<keyword id="KW-0067">ATP-binding</keyword>
<keyword id="KW-0227">DNA damage</keyword>
<keyword id="KW-0234">DNA repair</keyword>
<keyword id="KW-0238">DNA-binding</keyword>
<keyword id="KW-0547">Nucleotide-binding</keyword>
<accession>Q8PMX2</accession>
<reference key="1">
    <citation type="journal article" date="2002" name="Nature">
        <title>Comparison of the genomes of two Xanthomonas pathogens with differing host specificities.</title>
        <authorList>
            <person name="da Silva A.C.R."/>
            <person name="Ferro J.A."/>
            <person name="Reinach F.C."/>
            <person name="Farah C.S."/>
            <person name="Furlan L.R."/>
            <person name="Quaggio R.B."/>
            <person name="Monteiro-Vitorello C.B."/>
            <person name="Van Sluys M.A."/>
            <person name="Almeida N.F. Jr."/>
            <person name="Alves L.M.C."/>
            <person name="do Amaral A.M."/>
            <person name="Bertolini M.C."/>
            <person name="Camargo L.E.A."/>
            <person name="Camarotte G."/>
            <person name="Cannavan F."/>
            <person name="Cardozo J."/>
            <person name="Chambergo F."/>
            <person name="Ciapina L.P."/>
            <person name="Cicarelli R.M.B."/>
            <person name="Coutinho L.L."/>
            <person name="Cursino-Santos J.R."/>
            <person name="El-Dorry H."/>
            <person name="Faria J.B."/>
            <person name="Ferreira A.J.S."/>
            <person name="Ferreira R.C.C."/>
            <person name="Ferro M.I.T."/>
            <person name="Formighieri E.F."/>
            <person name="Franco M.C."/>
            <person name="Greggio C.C."/>
            <person name="Gruber A."/>
            <person name="Katsuyama A.M."/>
            <person name="Kishi L.T."/>
            <person name="Leite R.P."/>
            <person name="Lemos E.G.M."/>
            <person name="Lemos M.V.F."/>
            <person name="Locali E.C."/>
            <person name="Machado M.A."/>
            <person name="Madeira A.M.B.N."/>
            <person name="Martinez-Rossi N.M."/>
            <person name="Martins E.C."/>
            <person name="Meidanis J."/>
            <person name="Menck C.F.M."/>
            <person name="Miyaki C.Y."/>
            <person name="Moon D.H."/>
            <person name="Moreira L.M."/>
            <person name="Novo M.T.M."/>
            <person name="Okura V.K."/>
            <person name="Oliveira M.C."/>
            <person name="Oliveira V.R."/>
            <person name="Pereira H.A."/>
            <person name="Rossi A."/>
            <person name="Sena J.A.D."/>
            <person name="Silva C."/>
            <person name="de Souza R.F."/>
            <person name="Spinola L.A.F."/>
            <person name="Takita M.A."/>
            <person name="Tamura R.E."/>
            <person name="Teixeira E.C."/>
            <person name="Tezza R.I.D."/>
            <person name="Trindade dos Santos M."/>
            <person name="Truffi D."/>
            <person name="Tsai S.M."/>
            <person name="White F.F."/>
            <person name="Setubal J.C."/>
            <person name="Kitajima J.P."/>
        </authorList>
    </citation>
    <scope>NUCLEOTIDE SEQUENCE [LARGE SCALE GENOMIC DNA]</scope>
    <source>
        <strain>306</strain>
    </source>
</reference>
<evidence type="ECO:0000255" key="1">
    <source>
        <dbReference type="HAMAP-Rule" id="MF_00096"/>
    </source>
</evidence>
<gene>
    <name evidence="1" type="primary">mutS</name>
    <name type="ordered locus">XAC1303</name>
</gene>
<dbReference type="EMBL" id="AE008923">
    <property type="protein sequence ID" value="AAM36174.1"/>
    <property type="molecule type" value="Genomic_DNA"/>
</dbReference>
<dbReference type="SMR" id="Q8PMX2"/>
<dbReference type="KEGG" id="xac:XAC1303"/>
<dbReference type="eggNOG" id="COG0249">
    <property type="taxonomic scope" value="Bacteria"/>
</dbReference>
<dbReference type="HOGENOM" id="CLU_002472_4_0_6"/>
<dbReference type="Proteomes" id="UP000000576">
    <property type="component" value="Chromosome"/>
</dbReference>
<dbReference type="GO" id="GO:0005829">
    <property type="term" value="C:cytosol"/>
    <property type="evidence" value="ECO:0007669"/>
    <property type="project" value="TreeGrafter"/>
</dbReference>
<dbReference type="GO" id="GO:0005524">
    <property type="term" value="F:ATP binding"/>
    <property type="evidence" value="ECO:0007669"/>
    <property type="project" value="UniProtKB-UniRule"/>
</dbReference>
<dbReference type="GO" id="GO:0140664">
    <property type="term" value="F:ATP-dependent DNA damage sensor activity"/>
    <property type="evidence" value="ECO:0007669"/>
    <property type="project" value="InterPro"/>
</dbReference>
<dbReference type="GO" id="GO:0003684">
    <property type="term" value="F:damaged DNA binding"/>
    <property type="evidence" value="ECO:0007669"/>
    <property type="project" value="UniProtKB-UniRule"/>
</dbReference>
<dbReference type="GO" id="GO:0030983">
    <property type="term" value="F:mismatched DNA binding"/>
    <property type="evidence" value="ECO:0007669"/>
    <property type="project" value="InterPro"/>
</dbReference>
<dbReference type="GO" id="GO:0006298">
    <property type="term" value="P:mismatch repair"/>
    <property type="evidence" value="ECO:0007669"/>
    <property type="project" value="UniProtKB-UniRule"/>
</dbReference>
<dbReference type="CDD" id="cd03284">
    <property type="entry name" value="ABC_MutS1"/>
    <property type="match status" value="1"/>
</dbReference>
<dbReference type="FunFam" id="1.10.1420.10:FF:000018">
    <property type="entry name" value="DNA mismatch repair protein MutS"/>
    <property type="match status" value="1"/>
</dbReference>
<dbReference type="FunFam" id="3.30.420.110:FF:000023">
    <property type="entry name" value="DNA mismatch repair protein MutS"/>
    <property type="match status" value="1"/>
</dbReference>
<dbReference type="FunFam" id="3.40.1170.10:FF:000001">
    <property type="entry name" value="DNA mismatch repair protein MutS"/>
    <property type="match status" value="1"/>
</dbReference>
<dbReference type="FunFam" id="3.40.50.300:FF:000283">
    <property type="entry name" value="DNA mismatch repair protein MutS"/>
    <property type="match status" value="1"/>
</dbReference>
<dbReference type="Gene3D" id="1.10.1420.10">
    <property type="match status" value="2"/>
</dbReference>
<dbReference type="Gene3D" id="6.10.140.430">
    <property type="match status" value="1"/>
</dbReference>
<dbReference type="Gene3D" id="3.40.1170.10">
    <property type="entry name" value="DNA repair protein MutS, domain I"/>
    <property type="match status" value="1"/>
</dbReference>
<dbReference type="Gene3D" id="3.30.420.110">
    <property type="entry name" value="MutS, connector domain"/>
    <property type="match status" value="1"/>
</dbReference>
<dbReference type="Gene3D" id="3.40.50.300">
    <property type="entry name" value="P-loop containing nucleotide triphosphate hydrolases"/>
    <property type="match status" value="1"/>
</dbReference>
<dbReference type="HAMAP" id="MF_00096">
    <property type="entry name" value="MutS"/>
    <property type="match status" value="1"/>
</dbReference>
<dbReference type="InterPro" id="IPR005748">
    <property type="entry name" value="DNA_mismatch_repair_MutS"/>
</dbReference>
<dbReference type="InterPro" id="IPR007695">
    <property type="entry name" value="DNA_mismatch_repair_MutS-lik_N"/>
</dbReference>
<dbReference type="InterPro" id="IPR017261">
    <property type="entry name" value="DNA_mismatch_repair_MutS/MSH"/>
</dbReference>
<dbReference type="InterPro" id="IPR000432">
    <property type="entry name" value="DNA_mismatch_repair_MutS_C"/>
</dbReference>
<dbReference type="InterPro" id="IPR007861">
    <property type="entry name" value="DNA_mismatch_repair_MutS_clamp"/>
</dbReference>
<dbReference type="InterPro" id="IPR007696">
    <property type="entry name" value="DNA_mismatch_repair_MutS_core"/>
</dbReference>
<dbReference type="InterPro" id="IPR016151">
    <property type="entry name" value="DNA_mismatch_repair_MutS_N"/>
</dbReference>
<dbReference type="InterPro" id="IPR036187">
    <property type="entry name" value="DNA_mismatch_repair_MutS_sf"/>
</dbReference>
<dbReference type="InterPro" id="IPR007860">
    <property type="entry name" value="DNA_mmatch_repair_MutS_con_dom"/>
</dbReference>
<dbReference type="InterPro" id="IPR045076">
    <property type="entry name" value="MutS"/>
</dbReference>
<dbReference type="InterPro" id="IPR036678">
    <property type="entry name" value="MutS_con_dom_sf"/>
</dbReference>
<dbReference type="InterPro" id="IPR027417">
    <property type="entry name" value="P-loop_NTPase"/>
</dbReference>
<dbReference type="NCBIfam" id="TIGR01070">
    <property type="entry name" value="mutS1"/>
    <property type="match status" value="1"/>
</dbReference>
<dbReference type="NCBIfam" id="NF003810">
    <property type="entry name" value="PRK05399.1"/>
    <property type="match status" value="1"/>
</dbReference>
<dbReference type="PANTHER" id="PTHR11361:SF34">
    <property type="entry name" value="DNA MISMATCH REPAIR PROTEIN MSH1, MITOCHONDRIAL"/>
    <property type="match status" value="1"/>
</dbReference>
<dbReference type="PANTHER" id="PTHR11361">
    <property type="entry name" value="DNA MISMATCH REPAIR PROTEIN MUTS FAMILY MEMBER"/>
    <property type="match status" value="1"/>
</dbReference>
<dbReference type="Pfam" id="PF01624">
    <property type="entry name" value="MutS_I"/>
    <property type="match status" value="1"/>
</dbReference>
<dbReference type="Pfam" id="PF05188">
    <property type="entry name" value="MutS_II"/>
    <property type="match status" value="1"/>
</dbReference>
<dbReference type="Pfam" id="PF05192">
    <property type="entry name" value="MutS_III"/>
    <property type="match status" value="1"/>
</dbReference>
<dbReference type="Pfam" id="PF05190">
    <property type="entry name" value="MutS_IV"/>
    <property type="match status" value="1"/>
</dbReference>
<dbReference type="Pfam" id="PF00488">
    <property type="entry name" value="MutS_V"/>
    <property type="match status" value="1"/>
</dbReference>
<dbReference type="PIRSF" id="PIRSF037677">
    <property type="entry name" value="DNA_mis_repair_Msh6"/>
    <property type="match status" value="1"/>
</dbReference>
<dbReference type="SMART" id="SM00534">
    <property type="entry name" value="MUTSac"/>
    <property type="match status" value="1"/>
</dbReference>
<dbReference type="SMART" id="SM00533">
    <property type="entry name" value="MUTSd"/>
    <property type="match status" value="1"/>
</dbReference>
<dbReference type="SUPFAM" id="SSF55271">
    <property type="entry name" value="DNA repair protein MutS, domain I"/>
    <property type="match status" value="1"/>
</dbReference>
<dbReference type="SUPFAM" id="SSF53150">
    <property type="entry name" value="DNA repair protein MutS, domain II"/>
    <property type="match status" value="1"/>
</dbReference>
<dbReference type="SUPFAM" id="SSF48334">
    <property type="entry name" value="DNA repair protein MutS, domain III"/>
    <property type="match status" value="1"/>
</dbReference>
<dbReference type="SUPFAM" id="SSF52540">
    <property type="entry name" value="P-loop containing nucleoside triphosphate hydrolases"/>
    <property type="match status" value="1"/>
</dbReference>
<dbReference type="PROSITE" id="PS00486">
    <property type="entry name" value="DNA_MISMATCH_REPAIR_2"/>
    <property type="match status" value="1"/>
</dbReference>
<feature type="chain" id="PRO_0000115169" description="DNA mismatch repair protein MutS">
    <location>
        <begin position="1"/>
        <end position="902"/>
    </location>
</feature>
<feature type="binding site" evidence="1">
    <location>
        <begin position="654"/>
        <end position="661"/>
    </location>
    <ligand>
        <name>ATP</name>
        <dbReference type="ChEBI" id="CHEBI:30616"/>
    </ligand>
</feature>
<protein>
    <recommendedName>
        <fullName evidence="1">DNA mismatch repair protein MutS</fullName>
    </recommendedName>
</protein>
<comment type="function">
    <text evidence="1">This protein is involved in the repair of mismatches in DNA. It is possible that it carries out the mismatch recognition step. This protein has a weak ATPase activity.</text>
</comment>
<comment type="similarity">
    <text evidence="1">Belongs to the DNA mismatch repair MutS family.</text>
</comment>
<proteinExistence type="inferred from homology"/>